<accession>O60235</accession>
<accession>Q08AF6</accession>
<comment type="function">
    <text evidence="5 6">May play some biological role in the host defense system on the mucous membrane independently of or in cooperation with other substances in airway mucous or bronchial secretions. Plays a role in the proteolytic processing of ACE2. Proteolytically cleaves and activates the human coronavirus 229E (HCoV-229E) spike glycoprotein which facilitate virus-cell membrane fusions; spike proteins are synthesized and maintained in precursor intermediate folding states and proteolysis permits the refolding and energy release required to create stable virus-cell linkages and membrane coalescence. Preferentially cleaves the C-terminal side of arginine residues at the P1 position of certain peptides, cleaving Boc-Phe-Ser-Arg-4-methylcoumaryl-7-amide most efficiently and having an optimum pH of 8.6 with this substrate.</text>
</comment>
<comment type="activity regulation">
    <text>Strongly inhibited by diisopropyl fluorophosphate, leupeptin, antipain, aprotinin, and soybean trypsin inhibitor, but hardly inhibited by secretory leukocyte protease inhibitor at 10 microM.</text>
</comment>
<comment type="subunit">
    <text>Monomer.</text>
</comment>
<comment type="interaction">
    <interactant intactId="EBI-7639969">
        <id>O60235</id>
    </interactant>
    <interactant intactId="EBI-347996">
        <id>O43765</id>
        <label>SGTA</label>
    </interactant>
    <organismsDiffer>false</organismsDiffer>
    <experiments>3</experiments>
</comment>
<comment type="subcellular location">
    <subcellularLocation>
        <location>Cell membrane</location>
        <topology>Single-pass type II membrane protein</topology>
    </subcellularLocation>
    <text>Activated by cleavage and secreted.</text>
</comment>
<comment type="subcellular location">
    <molecule>Transmembrane protease serine 11D catalytic chain</molecule>
    <subcellularLocation>
        <location>Secreted</location>
    </subcellularLocation>
    <text>Activated by cleavage and secreted.</text>
</comment>
<comment type="tissue specificity">
    <text>Located in the cells of the submucosal serous glands of the bronchi and trachea.</text>
</comment>
<comment type="similarity">
    <text evidence="4">Belongs to the peptidase S1 family.</text>
</comment>
<name>TM11D_HUMAN</name>
<keyword id="KW-1003">Cell membrane</keyword>
<keyword id="KW-0903">Direct protein sequencing</keyword>
<keyword id="KW-1015">Disulfide bond</keyword>
<keyword id="KW-0325">Glycoprotein</keyword>
<keyword id="KW-0378">Hydrolase</keyword>
<keyword id="KW-0472">Membrane</keyword>
<keyword id="KW-0645">Protease</keyword>
<keyword id="KW-1267">Proteomics identification</keyword>
<keyword id="KW-1185">Reference proteome</keyword>
<keyword id="KW-0964">Secreted</keyword>
<keyword id="KW-0720">Serine protease</keyword>
<keyword id="KW-0735">Signal-anchor</keyword>
<keyword id="KW-0812">Transmembrane</keyword>
<keyword id="KW-1133">Transmembrane helix</keyword>
<keyword id="KW-0865">Zymogen</keyword>
<feature type="chain" id="PRO_0000027885" description="Transmembrane protease serine 11D non-catalytic chain">
    <location>
        <begin position="1"/>
        <end position="186"/>
    </location>
</feature>
<feature type="chain" id="PRO_0000027886" description="Transmembrane protease serine 11D catalytic chain">
    <location>
        <begin position="187"/>
        <end position="418"/>
    </location>
</feature>
<feature type="topological domain" description="Cytoplasmic" evidence="2">
    <location>
        <begin position="1"/>
        <end position="20"/>
    </location>
</feature>
<feature type="transmembrane region" description="Helical; Signal-anchor for type II membrane protein" evidence="2">
    <location>
        <begin position="21"/>
        <end position="41"/>
    </location>
</feature>
<feature type="topological domain" description="Extracellular" evidence="2">
    <location>
        <begin position="42"/>
        <end position="418"/>
    </location>
</feature>
<feature type="domain" description="SEA" evidence="3">
    <location>
        <begin position="46"/>
        <end position="163"/>
    </location>
</feature>
<feature type="domain" description="Peptidase S1" evidence="4">
    <location>
        <begin position="187"/>
        <end position="417"/>
    </location>
</feature>
<feature type="active site" description="Charge relay system" evidence="1">
    <location>
        <position position="227"/>
    </location>
</feature>
<feature type="active site" description="Charge relay system" evidence="1">
    <location>
        <position position="272"/>
    </location>
</feature>
<feature type="active site" description="Charge relay system" evidence="1">
    <location>
        <position position="368"/>
    </location>
</feature>
<feature type="glycosylation site" description="N-linked (GlcNAc...) asparagine" evidence="2">
    <location>
        <position position="144"/>
    </location>
</feature>
<feature type="disulfide bond" description="Interchain (between non-catalytic and catalytic chains)" evidence="4">
    <location>
        <begin position="173"/>
        <end position="292"/>
    </location>
</feature>
<feature type="disulfide bond" evidence="4">
    <location>
        <begin position="212"/>
        <end position="228"/>
    </location>
</feature>
<feature type="disulfide bond" evidence="4">
    <location>
        <begin position="337"/>
        <end position="353"/>
    </location>
</feature>
<feature type="disulfide bond" evidence="4">
    <location>
        <begin position="364"/>
        <end position="393"/>
    </location>
</feature>
<proteinExistence type="evidence at protein level"/>
<reference key="1">
    <citation type="journal article" date="1998" name="J. Biol. Chem.">
        <title>Cloning and characterization of the cDNA for human airway trypsin-like protease.</title>
        <authorList>
            <person name="Yamaoka K."/>
            <person name="Masuda K."/>
            <person name="Ogawa H."/>
            <person name="Takagi K."/>
            <person name="Umemoto N."/>
            <person name="Yasuoka S."/>
        </authorList>
    </citation>
    <scope>NUCLEOTIDE SEQUENCE [MRNA]</scope>
</reference>
<reference key="2">
    <citation type="journal article" date="2004" name="Genome Res.">
        <title>The status, quality, and expansion of the NIH full-length cDNA project: the Mammalian Gene Collection (MGC).</title>
        <authorList>
            <consortium name="The MGC Project Team"/>
        </authorList>
    </citation>
    <scope>NUCLEOTIDE SEQUENCE [LARGE SCALE MRNA]</scope>
</reference>
<reference key="3">
    <citation type="journal article" date="1997" name="Am. J. Respir. Cell Mol. Biol.">
        <title>Purification, characterization, and localization of a novel trypsin-like protease found in the human airway.</title>
        <authorList>
            <person name="Yasuoka S."/>
            <person name="Ohnishi T."/>
            <person name="Kawano S."/>
            <person name="Tsuchihashi S."/>
            <person name="Ogawara M."/>
            <person name="Masuda K."/>
            <person name="Yamaoka K."/>
            <person name="Takahashi M."/>
            <person name="Sano T."/>
        </authorList>
    </citation>
    <scope>PROTEIN SEQUENCE OF 187-206</scope>
    <scope>CHARACTERIZATION</scope>
</reference>
<reference key="4">
    <citation type="journal article" date="2013" name="J. Virol.">
        <title>TMPRSS2 activates the human coronavirus 229E for cathepsin-independent host cell entry and is expressed in viral target cells in the respiratory epithelium.</title>
        <authorList>
            <person name="Bertram S."/>
            <person name="Dijkman R."/>
            <person name="Habjan M."/>
            <person name="Heurich A."/>
            <person name="Gierer S."/>
            <person name="Glowacka I."/>
            <person name="Welsch K."/>
            <person name="Winkler M."/>
            <person name="Schneider H."/>
            <person name="Hofmann-Winkler H."/>
            <person name="Thiel V."/>
            <person name="Pohlmann S."/>
        </authorList>
    </citation>
    <scope>FUNCTION</scope>
</reference>
<reference key="5">
    <citation type="journal article" date="2014" name="J. Virol.">
        <title>TMPRSS2 and ADAM17 cleave ACE2 differentially and only proteolysis by TMPRSS2 augments entry driven by the severe acute respiratory syndrome coronavirus spike protein.</title>
        <authorList>
            <person name="Heurich A."/>
            <person name="Hofmann-Winkler H."/>
            <person name="Gierer S."/>
            <person name="Liepold T."/>
            <person name="Jahn O."/>
            <person name="Poehlmann S."/>
        </authorList>
    </citation>
    <scope>FUNCTION</scope>
</reference>
<dbReference type="EC" id="3.4.21.-"/>
<dbReference type="EMBL" id="AB002134">
    <property type="protein sequence ID" value="BAA28691.1"/>
    <property type="molecule type" value="mRNA"/>
</dbReference>
<dbReference type="EMBL" id="BC125195">
    <property type="protein sequence ID" value="AAI25196.1"/>
    <property type="molecule type" value="mRNA"/>
</dbReference>
<dbReference type="EMBL" id="BC125196">
    <property type="protein sequence ID" value="AAI25197.1"/>
    <property type="molecule type" value="mRNA"/>
</dbReference>
<dbReference type="CCDS" id="CCDS3518.1"/>
<dbReference type="RefSeq" id="NP_004253.1">
    <property type="nucleotide sequence ID" value="NM_004262.3"/>
</dbReference>
<dbReference type="SMR" id="O60235"/>
<dbReference type="BioGRID" id="114803">
    <property type="interactions" value="9"/>
</dbReference>
<dbReference type="FunCoup" id="O60235">
    <property type="interactions" value="64"/>
</dbReference>
<dbReference type="IntAct" id="O60235">
    <property type="interactions" value="5"/>
</dbReference>
<dbReference type="MINT" id="O60235"/>
<dbReference type="STRING" id="9606.ENSP00000283916"/>
<dbReference type="BindingDB" id="O60235"/>
<dbReference type="ChEMBL" id="CHEMBL1795138"/>
<dbReference type="GuidetoPHARMACOLOGY" id="2420"/>
<dbReference type="MEROPS" id="S01.047"/>
<dbReference type="GlyCosmos" id="O60235">
    <property type="glycosylation" value="1 site, No reported glycans"/>
</dbReference>
<dbReference type="GlyGen" id="O60235">
    <property type="glycosylation" value="2 sites, 1 O-linked glycan (1 site)"/>
</dbReference>
<dbReference type="iPTMnet" id="O60235"/>
<dbReference type="BioMuta" id="TMPRSS11D"/>
<dbReference type="jPOST" id="O60235"/>
<dbReference type="MassIVE" id="O60235"/>
<dbReference type="PaxDb" id="9606-ENSP00000283916"/>
<dbReference type="PeptideAtlas" id="O60235"/>
<dbReference type="PRIDE" id="O60235"/>
<dbReference type="ProteomicsDB" id="49261"/>
<dbReference type="Antibodypedia" id="12680">
    <property type="antibodies" value="149 antibodies from 28 providers"/>
</dbReference>
<dbReference type="DNASU" id="9407"/>
<dbReference type="Ensembl" id="ENST00000283916.11">
    <property type="protein sequence ID" value="ENSP00000283916.6"/>
    <property type="gene ID" value="ENSG00000153802.12"/>
</dbReference>
<dbReference type="GeneID" id="9407"/>
<dbReference type="KEGG" id="hsa:9407"/>
<dbReference type="MANE-Select" id="ENST00000283916.11">
    <property type="protein sequence ID" value="ENSP00000283916.6"/>
    <property type="RefSeq nucleotide sequence ID" value="NM_004262.3"/>
    <property type="RefSeq protein sequence ID" value="NP_004253.1"/>
</dbReference>
<dbReference type="UCSC" id="uc003hdq.4">
    <property type="organism name" value="human"/>
</dbReference>
<dbReference type="AGR" id="HGNC:24059"/>
<dbReference type="CTD" id="9407"/>
<dbReference type="DisGeNET" id="9407"/>
<dbReference type="GeneCards" id="TMPRSS11D"/>
<dbReference type="HGNC" id="HGNC:24059">
    <property type="gene designation" value="TMPRSS11D"/>
</dbReference>
<dbReference type="HPA" id="ENSG00000153802">
    <property type="expression patterns" value="Group enriched (cervix, esophagus, lymphoid tissue, salivary gland, vagina)"/>
</dbReference>
<dbReference type="MIM" id="605369">
    <property type="type" value="gene"/>
</dbReference>
<dbReference type="neXtProt" id="NX_O60235"/>
<dbReference type="OpenTargets" id="ENSG00000153802"/>
<dbReference type="PharmGKB" id="PA142670728"/>
<dbReference type="VEuPathDB" id="HostDB:ENSG00000153802"/>
<dbReference type="eggNOG" id="KOG3627">
    <property type="taxonomic scope" value="Eukaryota"/>
</dbReference>
<dbReference type="GeneTree" id="ENSGT00940000161719"/>
<dbReference type="HOGENOM" id="CLU_006842_19_0_1"/>
<dbReference type="InParanoid" id="O60235"/>
<dbReference type="OMA" id="QILNVEY"/>
<dbReference type="OrthoDB" id="9425590at2759"/>
<dbReference type="PAN-GO" id="O60235">
    <property type="GO annotations" value="0 GO annotations based on evolutionary models"/>
</dbReference>
<dbReference type="PhylomeDB" id="O60235"/>
<dbReference type="TreeFam" id="TF351684"/>
<dbReference type="BRENDA" id="3.4.21.B61">
    <property type="organism ID" value="2681"/>
</dbReference>
<dbReference type="PathwayCommons" id="O60235"/>
<dbReference type="SignaLink" id="O60235"/>
<dbReference type="BioGRID-ORCS" id="9407">
    <property type="hits" value="9 hits in 1145 CRISPR screens"/>
</dbReference>
<dbReference type="ChiTaRS" id="TMPRSS11D">
    <property type="organism name" value="human"/>
</dbReference>
<dbReference type="GeneWiki" id="TMPRSS11D"/>
<dbReference type="GenomeRNAi" id="9407"/>
<dbReference type="Pharos" id="O60235">
    <property type="development level" value="Tchem"/>
</dbReference>
<dbReference type="PRO" id="PR:O60235"/>
<dbReference type="Proteomes" id="UP000005640">
    <property type="component" value="Chromosome 4"/>
</dbReference>
<dbReference type="RNAct" id="O60235">
    <property type="molecule type" value="protein"/>
</dbReference>
<dbReference type="Bgee" id="ENSG00000153802">
    <property type="expression patterns" value="Expressed in tongue squamous epithelium and 134 other cell types or tissues"/>
</dbReference>
<dbReference type="ExpressionAtlas" id="O60235">
    <property type="expression patterns" value="baseline and differential"/>
</dbReference>
<dbReference type="GO" id="GO:0070062">
    <property type="term" value="C:extracellular exosome"/>
    <property type="evidence" value="ECO:0007005"/>
    <property type="project" value="UniProtKB"/>
</dbReference>
<dbReference type="GO" id="GO:0005576">
    <property type="term" value="C:extracellular region"/>
    <property type="evidence" value="ECO:0000304"/>
    <property type="project" value="ProtInc"/>
</dbReference>
<dbReference type="GO" id="GO:0005886">
    <property type="term" value="C:plasma membrane"/>
    <property type="evidence" value="ECO:0000304"/>
    <property type="project" value="ProtInc"/>
</dbReference>
<dbReference type="GO" id="GO:0008233">
    <property type="term" value="F:peptidase activity"/>
    <property type="evidence" value="ECO:0000304"/>
    <property type="project" value="ProtInc"/>
</dbReference>
<dbReference type="GO" id="GO:0004252">
    <property type="term" value="F:serine-type endopeptidase activity"/>
    <property type="evidence" value="ECO:0007669"/>
    <property type="project" value="InterPro"/>
</dbReference>
<dbReference type="GO" id="GO:0006508">
    <property type="term" value="P:proteolysis"/>
    <property type="evidence" value="ECO:0000314"/>
    <property type="project" value="UniProtKB"/>
</dbReference>
<dbReference type="GO" id="GO:0007585">
    <property type="term" value="P:respiratory gaseous exchange by respiratory system"/>
    <property type="evidence" value="ECO:0000304"/>
    <property type="project" value="ProtInc"/>
</dbReference>
<dbReference type="CDD" id="cd00190">
    <property type="entry name" value="Tryp_SPc"/>
    <property type="match status" value="1"/>
</dbReference>
<dbReference type="FunFam" id="3.30.70.960:FF:000010">
    <property type="entry name" value="Transmembrane protease serine"/>
    <property type="match status" value="1"/>
</dbReference>
<dbReference type="FunFam" id="2.40.10.10:FF:000003">
    <property type="entry name" value="Transmembrane serine protease 3"/>
    <property type="match status" value="1"/>
</dbReference>
<dbReference type="Gene3D" id="3.30.70.960">
    <property type="entry name" value="SEA domain"/>
    <property type="match status" value="1"/>
</dbReference>
<dbReference type="Gene3D" id="2.40.10.10">
    <property type="entry name" value="Trypsin-like serine proteases"/>
    <property type="match status" value="2"/>
</dbReference>
<dbReference type="InterPro" id="IPR017329">
    <property type="entry name" value="Pept_S1A_HAT/DESC1"/>
</dbReference>
<dbReference type="InterPro" id="IPR009003">
    <property type="entry name" value="Peptidase_S1_PA"/>
</dbReference>
<dbReference type="InterPro" id="IPR043504">
    <property type="entry name" value="Peptidase_S1_PA_chymotrypsin"/>
</dbReference>
<dbReference type="InterPro" id="IPR001314">
    <property type="entry name" value="Peptidase_S1A"/>
</dbReference>
<dbReference type="InterPro" id="IPR000082">
    <property type="entry name" value="SEA_dom"/>
</dbReference>
<dbReference type="InterPro" id="IPR036364">
    <property type="entry name" value="SEA_dom_sf"/>
</dbReference>
<dbReference type="InterPro" id="IPR001254">
    <property type="entry name" value="Trypsin_dom"/>
</dbReference>
<dbReference type="InterPro" id="IPR018114">
    <property type="entry name" value="TRYPSIN_HIS"/>
</dbReference>
<dbReference type="InterPro" id="IPR033116">
    <property type="entry name" value="TRYPSIN_SER"/>
</dbReference>
<dbReference type="PANTHER" id="PTHR24252">
    <property type="entry name" value="ACROSIN-RELATED"/>
    <property type="match status" value="1"/>
</dbReference>
<dbReference type="PANTHER" id="PTHR24252:SF7">
    <property type="entry name" value="HYALIN"/>
    <property type="match status" value="1"/>
</dbReference>
<dbReference type="Pfam" id="PF01390">
    <property type="entry name" value="SEA"/>
    <property type="match status" value="1"/>
</dbReference>
<dbReference type="Pfam" id="PF00089">
    <property type="entry name" value="Trypsin"/>
    <property type="match status" value="1"/>
</dbReference>
<dbReference type="PIRSF" id="PIRSF037941">
    <property type="entry name" value="TMPRSS11ABCDE"/>
    <property type="match status" value="1"/>
</dbReference>
<dbReference type="PRINTS" id="PR00722">
    <property type="entry name" value="CHYMOTRYPSIN"/>
</dbReference>
<dbReference type="SMART" id="SM00200">
    <property type="entry name" value="SEA"/>
    <property type="match status" value="1"/>
</dbReference>
<dbReference type="SMART" id="SM00020">
    <property type="entry name" value="Tryp_SPc"/>
    <property type="match status" value="1"/>
</dbReference>
<dbReference type="SUPFAM" id="SSF82671">
    <property type="entry name" value="SEA domain"/>
    <property type="match status" value="1"/>
</dbReference>
<dbReference type="SUPFAM" id="SSF50494">
    <property type="entry name" value="Trypsin-like serine proteases"/>
    <property type="match status" value="1"/>
</dbReference>
<dbReference type="PROSITE" id="PS50024">
    <property type="entry name" value="SEA"/>
    <property type="match status" value="1"/>
</dbReference>
<dbReference type="PROSITE" id="PS50240">
    <property type="entry name" value="TRYPSIN_DOM"/>
    <property type="match status" value="1"/>
</dbReference>
<dbReference type="PROSITE" id="PS00134">
    <property type="entry name" value="TRYPSIN_HIS"/>
    <property type="match status" value="1"/>
</dbReference>
<dbReference type="PROSITE" id="PS00135">
    <property type="entry name" value="TRYPSIN_SER"/>
    <property type="match status" value="1"/>
</dbReference>
<evidence type="ECO:0000250" key="1"/>
<evidence type="ECO:0000255" key="2"/>
<evidence type="ECO:0000255" key="3">
    <source>
        <dbReference type="PROSITE-ProRule" id="PRU00188"/>
    </source>
</evidence>
<evidence type="ECO:0000255" key="4">
    <source>
        <dbReference type="PROSITE-ProRule" id="PRU00274"/>
    </source>
</evidence>
<evidence type="ECO:0000269" key="5">
    <source>
    </source>
</evidence>
<evidence type="ECO:0000269" key="6">
    <source>
    </source>
</evidence>
<organism>
    <name type="scientific">Homo sapiens</name>
    <name type="common">Human</name>
    <dbReference type="NCBI Taxonomy" id="9606"/>
    <lineage>
        <taxon>Eukaryota</taxon>
        <taxon>Metazoa</taxon>
        <taxon>Chordata</taxon>
        <taxon>Craniata</taxon>
        <taxon>Vertebrata</taxon>
        <taxon>Euteleostomi</taxon>
        <taxon>Mammalia</taxon>
        <taxon>Eutheria</taxon>
        <taxon>Euarchontoglires</taxon>
        <taxon>Primates</taxon>
        <taxon>Haplorrhini</taxon>
        <taxon>Catarrhini</taxon>
        <taxon>Hominidae</taxon>
        <taxon>Homo</taxon>
    </lineage>
</organism>
<protein>
    <recommendedName>
        <fullName>Transmembrane protease serine 11D</fullName>
        <ecNumber>3.4.21.-</ecNumber>
    </recommendedName>
    <alternativeName>
        <fullName>Airway trypsin-like protease</fullName>
    </alternativeName>
    <component>
        <recommendedName>
            <fullName>Transmembrane protease serine 11D non-catalytic chain</fullName>
        </recommendedName>
    </component>
    <component>
        <recommendedName>
            <fullName>Transmembrane protease serine 11D catalytic chain</fullName>
        </recommendedName>
    </component>
</protein>
<sequence>MYRPARVTSTSRFLNPYVVCFIVVAGVVILAVTIALLVYFLAFDQKSYFYRSSFQLLNVEYNSQLNSPATQEYRTLSGRIESLITKTFKESNLRNQFIRAHVAKLRQDGSGVRADVVMKFQFTRNNNGASMKSRIESVLRQMLNNSGNLEINPSTEITSLTDQAAANWLINECGAGPDLITLSEQRILGGTEAEEGSWPWQVSLRLNNAHHCGGSLINNMWILTAAHCFRSNSNPRDWIATSGISTTFPKLRMRVRNILIHNNYKSATHENDIALVRLENSVTFTKDIHSVCLPAATQNIPPGSTAYVTGWGAQEYAGHTVPELRQGQVRIISNDVCNAPHSYNGAILSGMLCAGVPQGGVDACQGDSGGPLVQEDSRRLWFIVGIVSWGDQCGLPDKPGVYTRVTAYLDWIRQQTGI</sequence>
<gene>
    <name type="primary">TMPRSS11D</name>
    <name type="synonym">HAT</name>
</gene>